<evidence type="ECO:0000255" key="1">
    <source>
        <dbReference type="HAMAP-Rule" id="MF_00362"/>
    </source>
</evidence>
<evidence type="ECO:0000305" key="2"/>
<gene>
    <name evidence="1" type="primary">rplJ</name>
    <name type="ordered locus">Tfu_2656</name>
</gene>
<organism>
    <name type="scientific">Thermobifida fusca (strain YX)</name>
    <dbReference type="NCBI Taxonomy" id="269800"/>
    <lineage>
        <taxon>Bacteria</taxon>
        <taxon>Bacillati</taxon>
        <taxon>Actinomycetota</taxon>
        <taxon>Actinomycetes</taxon>
        <taxon>Streptosporangiales</taxon>
        <taxon>Nocardiopsidaceae</taxon>
        <taxon>Thermobifida</taxon>
    </lineage>
</organism>
<proteinExistence type="inferred from homology"/>
<dbReference type="EMBL" id="CP000088">
    <property type="protein sequence ID" value="AAZ56689.1"/>
    <property type="molecule type" value="Genomic_DNA"/>
</dbReference>
<dbReference type="RefSeq" id="WP_011293079.1">
    <property type="nucleotide sequence ID" value="NC_007333.1"/>
</dbReference>
<dbReference type="SMR" id="Q47LI3"/>
<dbReference type="STRING" id="269800.Tfu_2656"/>
<dbReference type="KEGG" id="tfu:Tfu_2656"/>
<dbReference type="eggNOG" id="COG0244">
    <property type="taxonomic scope" value="Bacteria"/>
</dbReference>
<dbReference type="HOGENOM" id="CLU_092227_1_0_11"/>
<dbReference type="OrthoDB" id="3186107at2"/>
<dbReference type="GO" id="GO:0015934">
    <property type="term" value="C:large ribosomal subunit"/>
    <property type="evidence" value="ECO:0007669"/>
    <property type="project" value="InterPro"/>
</dbReference>
<dbReference type="GO" id="GO:0070180">
    <property type="term" value="F:large ribosomal subunit rRNA binding"/>
    <property type="evidence" value="ECO:0007669"/>
    <property type="project" value="UniProtKB-UniRule"/>
</dbReference>
<dbReference type="GO" id="GO:0003735">
    <property type="term" value="F:structural constituent of ribosome"/>
    <property type="evidence" value="ECO:0007669"/>
    <property type="project" value="InterPro"/>
</dbReference>
<dbReference type="GO" id="GO:0006412">
    <property type="term" value="P:translation"/>
    <property type="evidence" value="ECO:0007669"/>
    <property type="project" value="UniProtKB-UniRule"/>
</dbReference>
<dbReference type="CDD" id="cd05797">
    <property type="entry name" value="Ribosomal_L10"/>
    <property type="match status" value="1"/>
</dbReference>
<dbReference type="Gene3D" id="3.30.70.1730">
    <property type="match status" value="1"/>
</dbReference>
<dbReference type="Gene3D" id="6.10.250.290">
    <property type="match status" value="1"/>
</dbReference>
<dbReference type="HAMAP" id="MF_00362">
    <property type="entry name" value="Ribosomal_uL10"/>
    <property type="match status" value="1"/>
</dbReference>
<dbReference type="InterPro" id="IPR001790">
    <property type="entry name" value="Ribosomal_uL10"/>
</dbReference>
<dbReference type="InterPro" id="IPR043141">
    <property type="entry name" value="Ribosomal_uL10-like_sf"/>
</dbReference>
<dbReference type="InterPro" id="IPR022973">
    <property type="entry name" value="Ribosomal_uL10_bac"/>
</dbReference>
<dbReference type="InterPro" id="IPR047865">
    <property type="entry name" value="Ribosomal_uL10_bac_type"/>
</dbReference>
<dbReference type="InterPro" id="IPR002363">
    <property type="entry name" value="Ribosomal_uL10_CS_bac"/>
</dbReference>
<dbReference type="NCBIfam" id="NF000955">
    <property type="entry name" value="PRK00099.1-1"/>
    <property type="match status" value="1"/>
</dbReference>
<dbReference type="PANTHER" id="PTHR11560">
    <property type="entry name" value="39S RIBOSOMAL PROTEIN L10, MITOCHONDRIAL"/>
    <property type="match status" value="1"/>
</dbReference>
<dbReference type="Pfam" id="PF00466">
    <property type="entry name" value="Ribosomal_L10"/>
    <property type="match status" value="1"/>
</dbReference>
<dbReference type="SUPFAM" id="SSF160369">
    <property type="entry name" value="Ribosomal protein L10-like"/>
    <property type="match status" value="1"/>
</dbReference>
<dbReference type="PROSITE" id="PS01109">
    <property type="entry name" value="RIBOSOMAL_L10"/>
    <property type="match status" value="1"/>
</dbReference>
<accession>Q47LI3</accession>
<comment type="function">
    <text evidence="1">Forms part of the ribosomal stalk, playing a central role in the interaction of the ribosome with GTP-bound translation factors.</text>
</comment>
<comment type="subunit">
    <text evidence="1">Part of the ribosomal stalk of the 50S ribosomal subunit. The N-terminus interacts with L11 and the large rRNA to form the base of the stalk. The C-terminus forms an elongated spine to which L12 dimers bind in a sequential fashion forming a multimeric L10(L12)X complex.</text>
</comment>
<comment type="similarity">
    <text evidence="1">Belongs to the universal ribosomal protein uL10 family.</text>
</comment>
<sequence>MPRPDKAAVVAELKEEFQTSSGAVLTEYRGLTVAQLTELRRSLGQNARFRVAKNTLTKIAAKEAGVTDSEVLDLLKGPSAIAFVKGDVVEAAKGLRDFAKENAALVIKGGLIDGKPMTPEEITKLADLESREVLLSKLAGAFKAKQSQAAAVFQALPSKAVRLVQALADKRGESQ</sequence>
<protein>
    <recommendedName>
        <fullName evidence="1">Large ribosomal subunit protein uL10</fullName>
    </recommendedName>
    <alternativeName>
        <fullName evidence="2">50S ribosomal protein L10</fullName>
    </alternativeName>
</protein>
<name>RL10_THEFY</name>
<reference key="1">
    <citation type="journal article" date="2007" name="J. Bacteriol.">
        <title>Genome sequence and analysis of the soil cellulolytic actinomycete Thermobifida fusca YX.</title>
        <authorList>
            <person name="Lykidis A."/>
            <person name="Mavromatis K."/>
            <person name="Ivanova N."/>
            <person name="Anderson I."/>
            <person name="Land M."/>
            <person name="DiBartolo G."/>
            <person name="Martinez M."/>
            <person name="Lapidus A."/>
            <person name="Lucas S."/>
            <person name="Copeland A."/>
            <person name="Richardson P."/>
            <person name="Wilson D.B."/>
            <person name="Kyrpides N."/>
        </authorList>
    </citation>
    <scope>NUCLEOTIDE SEQUENCE [LARGE SCALE GENOMIC DNA]</scope>
    <source>
        <strain>YX</strain>
    </source>
</reference>
<keyword id="KW-0687">Ribonucleoprotein</keyword>
<keyword id="KW-0689">Ribosomal protein</keyword>
<keyword id="KW-0694">RNA-binding</keyword>
<keyword id="KW-0699">rRNA-binding</keyword>
<feature type="chain" id="PRO_0000234902" description="Large ribosomal subunit protein uL10">
    <location>
        <begin position="1"/>
        <end position="175"/>
    </location>
</feature>